<evidence type="ECO:0000255" key="1">
    <source>
        <dbReference type="HAMAP-Rule" id="MF_00298"/>
    </source>
</evidence>
<evidence type="ECO:0000256" key="2">
    <source>
        <dbReference type="SAM" id="MobiDB-lite"/>
    </source>
</evidence>
<protein>
    <recommendedName>
        <fullName evidence="1">RNA pyrophosphohydrolase</fullName>
        <ecNumber evidence="1">3.6.1.-</ecNumber>
    </recommendedName>
    <alternativeName>
        <fullName evidence="1">(Di)nucleoside polyphosphate hydrolase</fullName>
    </alternativeName>
</protein>
<comment type="function">
    <text evidence="1">Accelerates the degradation of transcripts by removing pyrophosphate from the 5'-end of triphosphorylated RNA, leading to a more labile monophosphorylated state that can stimulate subsequent ribonuclease cleavage.</text>
</comment>
<comment type="cofactor">
    <cofactor evidence="1">
        <name>a divalent metal cation</name>
        <dbReference type="ChEBI" id="CHEBI:60240"/>
    </cofactor>
</comment>
<comment type="similarity">
    <text evidence="1">Belongs to the Nudix hydrolase family. RppH subfamily.</text>
</comment>
<sequence>MLDREGFRPNVGIILLNAHNEVFWGKRLREHSWQFPQGGIKYGETPVQAMYRELHEETGLLPEHVKVIGRTRDWLRYEVPDKFIKREVRGHYRGQKQIWFLLRMVGRDCDICLRATDHPEFDAWRWNEYWVPLDCVIEFKRDVYQLALTELSRFLRRPQPRTERPGGHHHGQRYPRMASSVNAPPGASMASSMTVTTVTTAIAVESTLRATIESDCSSTEDPAVQAPGLRD</sequence>
<proteinExistence type="inferred from homology"/>
<name>RPPH_PARP8</name>
<gene>
    <name evidence="1" type="primary">rppH</name>
    <name evidence="1" type="synonym">nudH</name>
    <name type="ordered locus">Bphy_2647</name>
</gene>
<keyword id="KW-0378">Hydrolase</keyword>
<keyword id="KW-1185">Reference proteome</keyword>
<dbReference type="EC" id="3.6.1.-" evidence="1"/>
<dbReference type="EMBL" id="CP001043">
    <property type="protein sequence ID" value="ACC71819.1"/>
    <property type="molecule type" value="Genomic_DNA"/>
</dbReference>
<dbReference type="RefSeq" id="WP_012402021.1">
    <property type="nucleotide sequence ID" value="NC_010622.1"/>
</dbReference>
<dbReference type="SMR" id="B2JHD4"/>
<dbReference type="STRING" id="391038.Bphy_2647"/>
<dbReference type="KEGG" id="bph:Bphy_2647"/>
<dbReference type="eggNOG" id="COG0494">
    <property type="taxonomic scope" value="Bacteria"/>
</dbReference>
<dbReference type="HOGENOM" id="CLU_087195_0_0_4"/>
<dbReference type="OrthoDB" id="9816040at2"/>
<dbReference type="Proteomes" id="UP000001192">
    <property type="component" value="Chromosome 1"/>
</dbReference>
<dbReference type="GO" id="GO:0016462">
    <property type="term" value="F:pyrophosphatase activity"/>
    <property type="evidence" value="ECO:0007669"/>
    <property type="project" value="UniProtKB-ARBA"/>
</dbReference>
<dbReference type="CDD" id="cd03671">
    <property type="entry name" value="NUDIX_Ap4A_hydrolase_plant_like"/>
    <property type="match status" value="1"/>
</dbReference>
<dbReference type="Gene3D" id="3.90.79.10">
    <property type="entry name" value="Nucleoside Triphosphate Pyrophosphohydrolase"/>
    <property type="match status" value="1"/>
</dbReference>
<dbReference type="HAMAP" id="MF_00298">
    <property type="entry name" value="Nudix_RppH"/>
    <property type="match status" value="1"/>
</dbReference>
<dbReference type="InterPro" id="IPR020476">
    <property type="entry name" value="Nudix_hydrolase"/>
</dbReference>
<dbReference type="InterPro" id="IPR015797">
    <property type="entry name" value="NUDIX_hydrolase-like_dom_sf"/>
</dbReference>
<dbReference type="InterPro" id="IPR020084">
    <property type="entry name" value="NUDIX_hydrolase_CS"/>
</dbReference>
<dbReference type="InterPro" id="IPR000086">
    <property type="entry name" value="NUDIX_hydrolase_dom"/>
</dbReference>
<dbReference type="InterPro" id="IPR022927">
    <property type="entry name" value="RppH"/>
</dbReference>
<dbReference type="NCBIfam" id="NF001935">
    <property type="entry name" value="PRK00714.1-2"/>
    <property type="match status" value="1"/>
</dbReference>
<dbReference type="NCBIfam" id="NF001937">
    <property type="entry name" value="PRK00714.1-4"/>
    <property type="match status" value="1"/>
</dbReference>
<dbReference type="NCBIfam" id="NF001938">
    <property type="entry name" value="PRK00714.1-5"/>
    <property type="match status" value="1"/>
</dbReference>
<dbReference type="PANTHER" id="PTHR43736">
    <property type="entry name" value="ADP-RIBOSE PYROPHOSPHATASE"/>
    <property type="match status" value="1"/>
</dbReference>
<dbReference type="PANTHER" id="PTHR43736:SF1">
    <property type="entry name" value="DIHYDRONEOPTERIN TRIPHOSPHATE DIPHOSPHATASE"/>
    <property type="match status" value="1"/>
</dbReference>
<dbReference type="Pfam" id="PF00293">
    <property type="entry name" value="NUDIX"/>
    <property type="match status" value="1"/>
</dbReference>
<dbReference type="PRINTS" id="PR00502">
    <property type="entry name" value="NUDIXFAMILY"/>
</dbReference>
<dbReference type="SUPFAM" id="SSF55811">
    <property type="entry name" value="Nudix"/>
    <property type="match status" value="1"/>
</dbReference>
<dbReference type="PROSITE" id="PS51462">
    <property type="entry name" value="NUDIX"/>
    <property type="match status" value="1"/>
</dbReference>
<dbReference type="PROSITE" id="PS00893">
    <property type="entry name" value="NUDIX_BOX"/>
    <property type="match status" value="1"/>
</dbReference>
<organism>
    <name type="scientific">Paraburkholderia phymatum (strain DSM 17167 / CIP 108236 / LMG 21445 / STM815)</name>
    <name type="common">Burkholderia phymatum</name>
    <dbReference type="NCBI Taxonomy" id="391038"/>
    <lineage>
        <taxon>Bacteria</taxon>
        <taxon>Pseudomonadati</taxon>
        <taxon>Pseudomonadota</taxon>
        <taxon>Betaproteobacteria</taxon>
        <taxon>Burkholderiales</taxon>
        <taxon>Burkholderiaceae</taxon>
        <taxon>Paraburkholderia</taxon>
    </lineage>
</organism>
<reference key="1">
    <citation type="journal article" date="2014" name="Stand. Genomic Sci.">
        <title>Complete genome sequence of Burkholderia phymatum STM815(T), a broad host range and efficient nitrogen-fixing symbiont of Mimosa species.</title>
        <authorList>
            <person name="Moulin L."/>
            <person name="Klonowska A."/>
            <person name="Caroline B."/>
            <person name="Booth K."/>
            <person name="Vriezen J.A."/>
            <person name="Melkonian R."/>
            <person name="James E.K."/>
            <person name="Young J.P."/>
            <person name="Bena G."/>
            <person name="Hauser L."/>
            <person name="Land M."/>
            <person name="Kyrpides N."/>
            <person name="Bruce D."/>
            <person name="Chain P."/>
            <person name="Copeland A."/>
            <person name="Pitluck S."/>
            <person name="Woyke T."/>
            <person name="Lizotte-Waniewski M."/>
            <person name="Bristow J."/>
            <person name="Riley M."/>
        </authorList>
    </citation>
    <scope>NUCLEOTIDE SEQUENCE [LARGE SCALE GENOMIC DNA]</scope>
    <source>
        <strain>DSM 17167 / CIP 108236 / LMG 21445 / STM815</strain>
    </source>
</reference>
<accession>B2JHD4</accession>
<feature type="chain" id="PRO_1000115271" description="RNA pyrophosphohydrolase">
    <location>
        <begin position="1"/>
        <end position="231"/>
    </location>
</feature>
<feature type="domain" description="Nudix hydrolase" evidence="1">
    <location>
        <begin position="6"/>
        <end position="149"/>
    </location>
</feature>
<feature type="region of interest" description="Disordered" evidence="2">
    <location>
        <begin position="157"/>
        <end position="190"/>
    </location>
</feature>
<feature type="short sequence motif" description="Nudix box">
    <location>
        <begin position="38"/>
        <end position="59"/>
    </location>
</feature>